<comment type="function">
    <text evidence="1">Probably involved in the polymerization of enterobacterial common antigen (ECA) trisaccharide repeat units.</text>
</comment>
<comment type="pathway">
    <text evidence="1">Bacterial outer membrane biogenesis; enterobacterial common antigen biosynthesis.</text>
</comment>
<comment type="subunit">
    <text evidence="1">Probably part of a complex composed of WzxE, WzyE and WzzE.</text>
</comment>
<comment type="subcellular location">
    <subcellularLocation>
        <location evidence="1">Cell inner membrane</location>
        <topology evidence="1">Multi-pass membrane protein</topology>
    </subcellularLocation>
</comment>
<comment type="similarity">
    <text evidence="1">Belongs to the WzyE family.</text>
</comment>
<organism>
    <name type="scientific">Escherichia coli O1:K1 / APEC</name>
    <dbReference type="NCBI Taxonomy" id="405955"/>
    <lineage>
        <taxon>Bacteria</taxon>
        <taxon>Pseudomonadati</taxon>
        <taxon>Pseudomonadota</taxon>
        <taxon>Gammaproteobacteria</taxon>
        <taxon>Enterobacterales</taxon>
        <taxon>Enterobacteriaceae</taxon>
        <taxon>Escherichia</taxon>
    </lineage>
</organism>
<keyword id="KW-0997">Cell inner membrane</keyword>
<keyword id="KW-1003">Cell membrane</keyword>
<keyword id="KW-0472">Membrane</keyword>
<keyword id="KW-1185">Reference proteome</keyword>
<keyword id="KW-0812">Transmembrane</keyword>
<keyword id="KW-1133">Transmembrane helix</keyword>
<sequence>MSLLQFSGLFVVWLLCTLFIATLTWFEFRRVRFNFNVFFSLLFLLTFFFGFPLTSVLVFRFDVGVAPPEILLQALLSAGCFYAVYYVTYKTRLRKRVADAPRRPLFTMNRVETNLTWVILMGIALVSVGIFFMHNGFLLFRLNSYSQIFSSEVSGVALKRFFYFFIPAMLVVYFLRQDSKAWLFFLVSTVAFGLLTYMIVGGTRANIIIAFAIFLFIGIIRGWISLWMLAAAGVLGIVGMFWLALKRYGMNVSGDEAFYTFLYLTRDTFSPWENLALLLQNYDNIDFQGLAPIVRDFYVFIPSWLWPGRPSMVLNSANYFTWEVLNNHSGLAISPTLIGSLVVMGGALFIPLGAIVVGLIIKWFDWLYELGNRETNRYKAAILHSFCFGAIFNMIVLAREGLDSFVSRVVFFIVVFGACLMIAKLLYWLFESAGLIHKRTKSSLRTQVEG</sequence>
<evidence type="ECO:0000255" key="1">
    <source>
        <dbReference type="HAMAP-Rule" id="MF_01003"/>
    </source>
</evidence>
<gene>
    <name evidence="1" type="primary">wzyE</name>
    <name type="ordered locus">Ecok1_37590</name>
    <name type="ORF">APECO1_2681</name>
</gene>
<protein>
    <recommendedName>
        <fullName evidence="1">Probable ECA polymerase</fullName>
    </recommendedName>
</protein>
<feature type="chain" id="PRO_1000062758" description="Probable ECA polymerase">
    <location>
        <begin position="1"/>
        <end position="450"/>
    </location>
</feature>
<feature type="transmembrane region" description="Helical" evidence="1">
    <location>
        <begin position="6"/>
        <end position="26"/>
    </location>
</feature>
<feature type="transmembrane region" description="Helical" evidence="1">
    <location>
        <begin position="37"/>
        <end position="57"/>
    </location>
</feature>
<feature type="transmembrane region" description="Helical" evidence="1">
    <location>
        <begin position="63"/>
        <end position="83"/>
    </location>
</feature>
<feature type="transmembrane region" description="Helical" evidence="1">
    <location>
        <begin position="118"/>
        <end position="138"/>
    </location>
</feature>
<feature type="transmembrane region" description="Helical" evidence="1">
    <location>
        <begin position="155"/>
        <end position="175"/>
    </location>
</feature>
<feature type="transmembrane region" description="Helical" evidence="1">
    <location>
        <begin position="181"/>
        <end position="201"/>
    </location>
</feature>
<feature type="transmembrane region" description="Helical" evidence="1">
    <location>
        <begin position="207"/>
        <end position="227"/>
    </location>
</feature>
<feature type="transmembrane region" description="Helical" evidence="1">
    <location>
        <begin position="228"/>
        <end position="248"/>
    </location>
</feature>
<feature type="transmembrane region" description="Helical" evidence="1">
    <location>
        <begin position="341"/>
        <end position="361"/>
    </location>
</feature>
<feature type="transmembrane region" description="Helical" evidence="1">
    <location>
        <begin position="378"/>
        <end position="398"/>
    </location>
</feature>
<feature type="transmembrane region" description="Helical" evidence="1">
    <location>
        <begin position="410"/>
        <end position="430"/>
    </location>
</feature>
<accession>A1AHW3</accession>
<proteinExistence type="inferred from homology"/>
<dbReference type="EMBL" id="CP000468">
    <property type="protein sequence ID" value="ABJ03253.1"/>
    <property type="molecule type" value="Genomic_DNA"/>
</dbReference>
<dbReference type="RefSeq" id="WP_000055119.1">
    <property type="nucleotide sequence ID" value="NZ_CADILS010000046.1"/>
</dbReference>
<dbReference type="KEGG" id="ecv:APECO1_2681"/>
<dbReference type="HOGENOM" id="CLU_049711_0_0_6"/>
<dbReference type="UniPathway" id="UPA00566"/>
<dbReference type="Proteomes" id="UP000008216">
    <property type="component" value="Chromosome"/>
</dbReference>
<dbReference type="GO" id="GO:0005886">
    <property type="term" value="C:plasma membrane"/>
    <property type="evidence" value="ECO:0007669"/>
    <property type="project" value="UniProtKB-SubCell"/>
</dbReference>
<dbReference type="GO" id="GO:0009246">
    <property type="term" value="P:enterobacterial common antigen biosynthetic process"/>
    <property type="evidence" value="ECO:0007669"/>
    <property type="project" value="UniProtKB-UniRule"/>
</dbReference>
<dbReference type="HAMAP" id="MF_01003">
    <property type="entry name" value="WzyE"/>
    <property type="match status" value="1"/>
</dbReference>
<dbReference type="InterPro" id="IPR010691">
    <property type="entry name" value="WzyE"/>
</dbReference>
<dbReference type="NCBIfam" id="NF002820">
    <property type="entry name" value="PRK02975.1"/>
    <property type="match status" value="1"/>
</dbReference>
<dbReference type="Pfam" id="PF06899">
    <property type="entry name" value="WzyE"/>
    <property type="match status" value="1"/>
</dbReference>
<reference key="1">
    <citation type="journal article" date="2007" name="J. Bacteriol.">
        <title>The genome sequence of avian pathogenic Escherichia coli strain O1:K1:H7 shares strong similarities with human extraintestinal pathogenic E. coli genomes.</title>
        <authorList>
            <person name="Johnson T.J."/>
            <person name="Kariyawasam S."/>
            <person name="Wannemuehler Y."/>
            <person name="Mangiamele P."/>
            <person name="Johnson S.J."/>
            <person name="Doetkott C."/>
            <person name="Skyberg J.A."/>
            <person name="Lynne A.M."/>
            <person name="Johnson J.R."/>
            <person name="Nolan L.K."/>
        </authorList>
    </citation>
    <scope>NUCLEOTIDE SEQUENCE [LARGE SCALE GENOMIC DNA]</scope>
</reference>
<name>WZYE_ECOK1</name>